<gene>
    <name evidence="1" type="primary">rpmJ</name>
    <name type="ordered locus">Saro_3273</name>
</gene>
<evidence type="ECO:0000255" key="1">
    <source>
        <dbReference type="HAMAP-Rule" id="MF_00251"/>
    </source>
</evidence>
<evidence type="ECO:0000305" key="2"/>
<name>RL36_NOVAD</name>
<comment type="similarity">
    <text evidence="1">Belongs to the bacterial ribosomal protein bL36 family.</text>
</comment>
<keyword id="KW-1185">Reference proteome</keyword>
<keyword id="KW-0687">Ribonucleoprotein</keyword>
<keyword id="KW-0689">Ribosomal protein</keyword>
<reference key="1">
    <citation type="submission" date="2006-01" db="EMBL/GenBank/DDBJ databases">
        <title>Complete sequence of Novosphingobium aromaticivorans DSM 12444.</title>
        <authorList>
            <consortium name="US DOE Joint Genome Institute"/>
            <person name="Copeland A."/>
            <person name="Lucas S."/>
            <person name="Lapidus A."/>
            <person name="Barry K."/>
            <person name="Detter J.C."/>
            <person name="Glavina T."/>
            <person name="Hammon N."/>
            <person name="Israni S."/>
            <person name="Pitluck S."/>
            <person name="Chain P."/>
            <person name="Malfatti S."/>
            <person name="Shin M."/>
            <person name="Vergez L."/>
            <person name="Schmutz J."/>
            <person name="Larimer F."/>
            <person name="Land M."/>
            <person name="Kyrpides N."/>
            <person name="Ivanova N."/>
            <person name="Fredrickson J."/>
            <person name="Balkwill D."/>
            <person name="Romine M.F."/>
            <person name="Richardson P."/>
        </authorList>
    </citation>
    <scope>NUCLEOTIDE SEQUENCE [LARGE SCALE GENOMIC DNA]</scope>
    <source>
        <strain>ATCC 700278 / DSM 12444 / CCUG 56034 / CIP 105152 / NBRC 16084 / F199</strain>
    </source>
</reference>
<dbReference type="EMBL" id="CP000248">
    <property type="protein sequence ID" value="ABD27708.1"/>
    <property type="molecule type" value="Genomic_DNA"/>
</dbReference>
<dbReference type="SMR" id="Q2G365"/>
<dbReference type="STRING" id="279238.Saro_3273"/>
<dbReference type="KEGG" id="nar:Saro_3273"/>
<dbReference type="eggNOG" id="COG0257">
    <property type="taxonomic scope" value="Bacteria"/>
</dbReference>
<dbReference type="HOGENOM" id="CLU_135723_3_2_5"/>
<dbReference type="Proteomes" id="UP000009134">
    <property type="component" value="Chromosome"/>
</dbReference>
<dbReference type="GO" id="GO:1990904">
    <property type="term" value="C:ribonucleoprotein complex"/>
    <property type="evidence" value="ECO:0007669"/>
    <property type="project" value="UniProtKB-KW"/>
</dbReference>
<dbReference type="GO" id="GO:0005840">
    <property type="term" value="C:ribosome"/>
    <property type="evidence" value="ECO:0007669"/>
    <property type="project" value="UniProtKB-KW"/>
</dbReference>
<dbReference type="GO" id="GO:0003735">
    <property type="term" value="F:structural constituent of ribosome"/>
    <property type="evidence" value="ECO:0007669"/>
    <property type="project" value="InterPro"/>
</dbReference>
<dbReference type="GO" id="GO:0006412">
    <property type="term" value="P:translation"/>
    <property type="evidence" value="ECO:0007669"/>
    <property type="project" value="UniProtKB-UniRule"/>
</dbReference>
<dbReference type="HAMAP" id="MF_00251">
    <property type="entry name" value="Ribosomal_bL36"/>
    <property type="match status" value="1"/>
</dbReference>
<dbReference type="InterPro" id="IPR000473">
    <property type="entry name" value="Ribosomal_bL36"/>
</dbReference>
<dbReference type="InterPro" id="IPR035977">
    <property type="entry name" value="Ribosomal_bL36_sp"/>
</dbReference>
<dbReference type="InterPro" id="IPR047621">
    <property type="entry name" value="Ribosomal_L36_bact"/>
</dbReference>
<dbReference type="NCBIfam" id="NF002021">
    <property type="entry name" value="PRK00831.1"/>
    <property type="match status" value="1"/>
</dbReference>
<dbReference type="NCBIfam" id="TIGR01022">
    <property type="entry name" value="rpmJ_bact"/>
    <property type="match status" value="1"/>
</dbReference>
<dbReference type="PANTHER" id="PTHR47781">
    <property type="entry name" value="50S RIBOSOMAL PROTEIN L36 2"/>
    <property type="match status" value="1"/>
</dbReference>
<dbReference type="PANTHER" id="PTHR47781:SF1">
    <property type="entry name" value="LARGE RIBOSOMAL SUBUNIT PROTEIN BL36B"/>
    <property type="match status" value="1"/>
</dbReference>
<dbReference type="Pfam" id="PF00444">
    <property type="entry name" value="Ribosomal_L36"/>
    <property type="match status" value="1"/>
</dbReference>
<dbReference type="SUPFAM" id="SSF57840">
    <property type="entry name" value="Ribosomal protein L36"/>
    <property type="match status" value="1"/>
</dbReference>
<dbReference type="PROSITE" id="PS00828">
    <property type="entry name" value="RIBOSOMAL_L36"/>
    <property type="match status" value="1"/>
</dbReference>
<sequence length="41" mass="5080">MKIRNSLKSLKDRHRDNRVIRRRGRVYVINKTQKRFKARQG</sequence>
<proteinExistence type="inferred from homology"/>
<organism>
    <name type="scientific">Novosphingobium aromaticivorans (strain ATCC 700278 / DSM 12444 / CCUG 56034 / CIP 105152 / NBRC 16084 / F199)</name>
    <dbReference type="NCBI Taxonomy" id="279238"/>
    <lineage>
        <taxon>Bacteria</taxon>
        <taxon>Pseudomonadati</taxon>
        <taxon>Pseudomonadota</taxon>
        <taxon>Alphaproteobacteria</taxon>
        <taxon>Sphingomonadales</taxon>
        <taxon>Sphingomonadaceae</taxon>
        <taxon>Novosphingobium</taxon>
    </lineage>
</organism>
<feature type="chain" id="PRO_0000302257" description="Large ribosomal subunit protein bL36">
    <location>
        <begin position="1"/>
        <end position="41"/>
    </location>
</feature>
<protein>
    <recommendedName>
        <fullName evidence="1">Large ribosomal subunit protein bL36</fullName>
    </recommendedName>
    <alternativeName>
        <fullName evidence="2">50S ribosomal protein L36</fullName>
    </alternativeName>
</protein>
<accession>Q2G365</accession>